<protein>
    <recommendedName>
        <fullName evidence="1">Formate-dependent phosphoribosylglycinamide formyltransferase</fullName>
        <ecNumber evidence="1">6.3.1.21</ecNumber>
    </recommendedName>
    <alternativeName>
        <fullName evidence="1">5'-phosphoribosylglycinamide transformylase 2</fullName>
    </alternativeName>
    <alternativeName>
        <fullName evidence="1">Formate-dependent GAR transformylase</fullName>
    </alternativeName>
    <alternativeName>
        <fullName evidence="1">GAR transformylase 2</fullName>
        <shortName evidence="1">GART 2</shortName>
    </alternativeName>
    <alternativeName>
        <fullName evidence="1">Non-folate glycinamide ribonucleotide transformylase</fullName>
    </alternativeName>
    <alternativeName>
        <fullName evidence="1">Phosphoribosylglycinamide formyltransferase 2</fullName>
    </alternativeName>
</protein>
<feature type="chain" id="PRO_0000319227" description="Formate-dependent phosphoribosylglycinamide formyltransferase">
    <location>
        <begin position="1"/>
        <end position="392"/>
    </location>
</feature>
<feature type="domain" description="ATP-grasp" evidence="1">
    <location>
        <begin position="119"/>
        <end position="308"/>
    </location>
</feature>
<feature type="binding site" evidence="1">
    <location>
        <begin position="22"/>
        <end position="23"/>
    </location>
    <ligand>
        <name>N(1)-(5-phospho-beta-D-ribosyl)glycinamide</name>
        <dbReference type="ChEBI" id="CHEBI:143788"/>
    </ligand>
</feature>
<feature type="binding site" evidence="1">
    <location>
        <position position="82"/>
    </location>
    <ligand>
        <name>N(1)-(5-phospho-beta-D-ribosyl)glycinamide</name>
        <dbReference type="ChEBI" id="CHEBI:143788"/>
    </ligand>
</feature>
<feature type="binding site" evidence="1">
    <location>
        <position position="114"/>
    </location>
    <ligand>
        <name>ATP</name>
        <dbReference type="ChEBI" id="CHEBI:30616"/>
    </ligand>
</feature>
<feature type="binding site" evidence="1">
    <location>
        <position position="155"/>
    </location>
    <ligand>
        <name>ATP</name>
        <dbReference type="ChEBI" id="CHEBI:30616"/>
    </ligand>
</feature>
<feature type="binding site" evidence="1">
    <location>
        <begin position="160"/>
        <end position="165"/>
    </location>
    <ligand>
        <name>ATP</name>
        <dbReference type="ChEBI" id="CHEBI:30616"/>
    </ligand>
</feature>
<feature type="binding site" evidence="1">
    <location>
        <begin position="195"/>
        <end position="198"/>
    </location>
    <ligand>
        <name>ATP</name>
        <dbReference type="ChEBI" id="CHEBI:30616"/>
    </ligand>
</feature>
<feature type="binding site" evidence="1">
    <location>
        <position position="203"/>
    </location>
    <ligand>
        <name>ATP</name>
        <dbReference type="ChEBI" id="CHEBI:30616"/>
    </ligand>
</feature>
<feature type="binding site" evidence="1">
    <location>
        <position position="267"/>
    </location>
    <ligand>
        <name>Mg(2+)</name>
        <dbReference type="ChEBI" id="CHEBI:18420"/>
    </ligand>
</feature>
<feature type="binding site" evidence="1">
    <location>
        <position position="279"/>
    </location>
    <ligand>
        <name>Mg(2+)</name>
        <dbReference type="ChEBI" id="CHEBI:18420"/>
    </ligand>
</feature>
<feature type="binding site" evidence="1">
    <location>
        <position position="286"/>
    </location>
    <ligand>
        <name>N(1)-(5-phospho-beta-D-ribosyl)glycinamide</name>
        <dbReference type="ChEBI" id="CHEBI:143788"/>
    </ligand>
</feature>
<feature type="binding site" evidence="1">
    <location>
        <position position="355"/>
    </location>
    <ligand>
        <name>N(1)-(5-phospho-beta-D-ribosyl)glycinamide</name>
        <dbReference type="ChEBI" id="CHEBI:143788"/>
    </ligand>
</feature>
<feature type="binding site" evidence="1">
    <location>
        <begin position="362"/>
        <end position="363"/>
    </location>
    <ligand>
        <name>N(1)-(5-phospho-beta-D-ribosyl)glycinamide</name>
        <dbReference type="ChEBI" id="CHEBI:143788"/>
    </ligand>
</feature>
<reference key="1">
    <citation type="journal article" date="2001" name="Nature">
        <title>Complete genome sequence of Salmonella enterica serovar Typhimurium LT2.</title>
        <authorList>
            <person name="McClelland M."/>
            <person name="Sanderson K.E."/>
            <person name="Spieth J."/>
            <person name="Clifton S.W."/>
            <person name="Latreille P."/>
            <person name="Courtney L."/>
            <person name="Porwollik S."/>
            <person name="Ali J."/>
            <person name="Dante M."/>
            <person name="Du F."/>
            <person name="Hou S."/>
            <person name="Layman D."/>
            <person name="Leonard S."/>
            <person name="Nguyen C."/>
            <person name="Scott K."/>
            <person name="Holmes A."/>
            <person name="Grewal N."/>
            <person name="Mulvaney E."/>
            <person name="Ryan E."/>
            <person name="Sun H."/>
            <person name="Florea L."/>
            <person name="Miller W."/>
            <person name="Stoneking T."/>
            <person name="Nhan M."/>
            <person name="Waterston R."/>
            <person name="Wilson R.K."/>
        </authorList>
    </citation>
    <scope>NUCLEOTIDE SEQUENCE [LARGE SCALE GENOMIC DNA]</scope>
    <source>
        <strain>LT2 / SGSC1412 / ATCC 700720</strain>
    </source>
</reference>
<dbReference type="EC" id="6.3.1.21" evidence="1"/>
<dbReference type="EMBL" id="AE006468">
    <property type="protein sequence ID" value="AAL20799.1"/>
    <property type="molecule type" value="Genomic_DNA"/>
</dbReference>
<dbReference type="RefSeq" id="NP_460840.1">
    <property type="nucleotide sequence ID" value="NC_003197.2"/>
</dbReference>
<dbReference type="RefSeq" id="WP_000173431.1">
    <property type="nucleotide sequence ID" value="NC_003197.2"/>
</dbReference>
<dbReference type="SMR" id="Q8ZNW5"/>
<dbReference type="STRING" id="99287.STM1883"/>
<dbReference type="PaxDb" id="99287-STM1883"/>
<dbReference type="GeneID" id="1253404"/>
<dbReference type="KEGG" id="stm:STM1883"/>
<dbReference type="PATRIC" id="fig|99287.12.peg.1996"/>
<dbReference type="HOGENOM" id="CLU_011534_1_3_6"/>
<dbReference type="OMA" id="GMVTMIT"/>
<dbReference type="PhylomeDB" id="Q8ZNW5"/>
<dbReference type="BioCyc" id="SENT99287:STM1883-MONOMER"/>
<dbReference type="UniPathway" id="UPA00074">
    <property type="reaction ID" value="UER00127"/>
</dbReference>
<dbReference type="Proteomes" id="UP000001014">
    <property type="component" value="Chromosome"/>
</dbReference>
<dbReference type="GO" id="GO:0005829">
    <property type="term" value="C:cytosol"/>
    <property type="evidence" value="ECO:0000318"/>
    <property type="project" value="GO_Central"/>
</dbReference>
<dbReference type="GO" id="GO:0005524">
    <property type="term" value="F:ATP binding"/>
    <property type="evidence" value="ECO:0007669"/>
    <property type="project" value="UniProtKB-UniRule"/>
</dbReference>
<dbReference type="GO" id="GO:0000287">
    <property type="term" value="F:magnesium ion binding"/>
    <property type="evidence" value="ECO:0007669"/>
    <property type="project" value="InterPro"/>
</dbReference>
<dbReference type="GO" id="GO:0043815">
    <property type="term" value="F:phosphoribosylglycinamide formyltransferase 2 activity"/>
    <property type="evidence" value="ECO:0007669"/>
    <property type="project" value="UniProtKB-UniRule"/>
</dbReference>
<dbReference type="GO" id="GO:0004644">
    <property type="term" value="F:phosphoribosylglycinamide formyltransferase activity"/>
    <property type="evidence" value="ECO:0007669"/>
    <property type="project" value="InterPro"/>
</dbReference>
<dbReference type="GO" id="GO:0006189">
    <property type="term" value="P:'de novo' IMP biosynthetic process"/>
    <property type="evidence" value="ECO:0007669"/>
    <property type="project" value="UniProtKB-UniRule"/>
</dbReference>
<dbReference type="FunFam" id="3.30.1490.20:FF:000013">
    <property type="entry name" value="Formate-dependent phosphoribosylglycinamide formyltransferase"/>
    <property type="match status" value="1"/>
</dbReference>
<dbReference type="FunFam" id="3.30.470.20:FF:000027">
    <property type="entry name" value="Formate-dependent phosphoribosylglycinamide formyltransferase"/>
    <property type="match status" value="1"/>
</dbReference>
<dbReference type="FunFam" id="3.40.50.20:FF:000007">
    <property type="entry name" value="Formate-dependent phosphoribosylglycinamide formyltransferase"/>
    <property type="match status" value="1"/>
</dbReference>
<dbReference type="Gene3D" id="3.40.50.20">
    <property type="match status" value="1"/>
</dbReference>
<dbReference type="Gene3D" id="3.30.1490.20">
    <property type="entry name" value="ATP-grasp fold, A domain"/>
    <property type="match status" value="1"/>
</dbReference>
<dbReference type="Gene3D" id="3.30.470.20">
    <property type="entry name" value="ATP-grasp fold, B domain"/>
    <property type="match status" value="1"/>
</dbReference>
<dbReference type="HAMAP" id="MF_01643">
    <property type="entry name" value="PurT"/>
    <property type="match status" value="1"/>
</dbReference>
<dbReference type="InterPro" id="IPR011761">
    <property type="entry name" value="ATP-grasp"/>
</dbReference>
<dbReference type="InterPro" id="IPR003135">
    <property type="entry name" value="ATP-grasp_carboxylate-amine"/>
</dbReference>
<dbReference type="InterPro" id="IPR013815">
    <property type="entry name" value="ATP_grasp_subdomain_1"/>
</dbReference>
<dbReference type="InterPro" id="IPR011764">
    <property type="entry name" value="Biotin_carboxylation_dom"/>
</dbReference>
<dbReference type="InterPro" id="IPR016185">
    <property type="entry name" value="PreATP-grasp_dom_sf"/>
</dbReference>
<dbReference type="InterPro" id="IPR005862">
    <property type="entry name" value="PurT"/>
</dbReference>
<dbReference type="InterPro" id="IPR054350">
    <property type="entry name" value="PurT/PurK_preATP-grasp"/>
</dbReference>
<dbReference type="InterPro" id="IPR048740">
    <property type="entry name" value="PurT_C"/>
</dbReference>
<dbReference type="InterPro" id="IPR011054">
    <property type="entry name" value="Rudment_hybrid_motif"/>
</dbReference>
<dbReference type="NCBIfam" id="NF006766">
    <property type="entry name" value="PRK09288.1"/>
    <property type="match status" value="1"/>
</dbReference>
<dbReference type="NCBIfam" id="TIGR01142">
    <property type="entry name" value="purT"/>
    <property type="match status" value="1"/>
</dbReference>
<dbReference type="PANTHER" id="PTHR43055">
    <property type="entry name" value="FORMATE-DEPENDENT PHOSPHORIBOSYLGLYCINAMIDE FORMYLTRANSFERASE"/>
    <property type="match status" value="1"/>
</dbReference>
<dbReference type="PANTHER" id="PTHR43055:SF1">
    <property type="entry name" value="FORMATE-DEPENDENT PHOSPHORIBOSYLGLYCINAMIDE FORMYLTRANSFERASE"/>
    <property type="match status" value="1"/>
</dbReference>
<dbReference type="Pfam" id="PF02222">
    <property type="entry name" value="ATP-grasp"/>
    <property type="match status" value="1"/>
</dbReference>
<dbReference type="Pfam" id="PF21244">
    <property type="entry name" value="PurT_C"/>
    <property type="match status" value="1"/>
</dbReference>
<dbReference type="Pfam" id="PF22660">
    <property type="entry name" value="RS_preATP-grasp-like"/>
    <property type="match status" value="1"/>
</dbReference>
<dbReference type="SUPFAM" id="SSF56059">
    <property type="entry name" value="Glutathione synthetase ATP-binding domain-like"/>
    <property type="match status" value="1"/>
</dbReference>
<dbReference type="SUPFAM" id="SSF52440">
    <property type="entry name" value="PreATP-grasp domain"/>
    <property type="match status" value="1"/>
</dbReference>
<dbReference type="SUPFAM" id="SSF51246">
    <property type="entry name" value="Rudiment single hybrid motif"/>
    <property type="match status" value="1"/>
</dbReference>
<dbReference type="PROSITE" id="PS50975">
    <property type="entry name" value="ATP_GRASP"/>
    <property type="match status" value="1"/>
</dbReference>
<keyword id="KW-0067">ATP-binding</keyword>
<keyword id="KW-0436">Ligase</keyword>
<keyword id="KW-0460">Magnesium</keyword>
<keyword id="KW-0479">Metal-binding</keyword>
<keyword id="KW-0547">Nucleotide-binding</keyword>
<keyword id="KW-0658">Purine biosynthesis</keyword>
<keyword id="KW-1185">Reference proteome</keyword>
<accession>Q8ZNW5</accession>
<name>PURT_SALTY</name>
<evidence type="ECO:0000255" key="1">
    <source>
        <dbReference type="HAMAP-Rule" id="MF_01643"/>
    </source>
</evidence>
<proteinExistence type="inferred from homology"/>
<gene>
    <name evidence="1" type="primary">purT</name>
    <name type="ordered locus">STM1883</name>
</gene>
<organism>
    <name type="scientific">Salmonella typhimurium (strain LT2 / SGSC1412 / ATCC 700720)</name>
    <dbReference type="NCBI Taxonomy" id="99287"/>
    <lineage>
        <taxon>Bacteria</taxon>
        <taxon>Pseudomonadati</taxon>
        <taxon>Pseudomonadota</taxon>
        <taxon>Gammaproteobacteria</taxon>
        <taxon>Enterobacterales</taxon>
        <taxon>Enterobacteriaceae</taxon>
        <taxon>Salmonella</taxon>
    </lineage>
</organism>
<sequence>MTLLGTALRPAATRVMLLGAGELGKEVAIECQRLGIEVIAVDRYPDAPAMHVAHRSHVINMLDGEALRHVITEEKPHYIVPEIEAIATDTLRELEGEGLNVVPCARATQLTMNREGIRRLAAEELGLPTSTYRFADSEASFHDAVAAVGFPCIVKPVMSSSGKGQSFIRSAEQLAQAWEYAQQGGRAGAGRVIVEGVVKFDFEITLLTVSAVDGVHFCAPVGHRQQDGDYRESWQPQQMSELALKRAQEIARHVVLALGGHGLFGVELFVCGDEVIFSEVSPRPHDTGMVTLISQDLSEFALHVRAFLGMPVGAIRQYGPAASAVILPQLTSQNVTFDNVHAAVGAGVQVRLFGKPEIDGTRRLGVALATGENVEEAVIRAKKAVSRVTVKG</sequence>
<comment type="function">
    <text evidence="1">Involved in the de novo purine biosynthesis. Catalyzes the transfer of formate to 5-phospho-ribosyl-glycinamide (GAR), producing 5-phospho-ribosyl-N-formylglycinamide (FGAR). Formate is provided by PurU via hydrolysis of 10-formyl-tetrahydrofolate.</text>
</comment>
<comment type="catalytic activity">
    <reaction evidence="1">
        <text>N(1)-(5-phospho-beta-D-ribosyl)glycinamide + formate + ATP = N(2)-formyl-N(1)-(5-phospho-beta-D-ribosyl)glycinamide + ADP + phosphate + H(+)</text>
        <dbReference type="Rhea" id="RHEA:24829"/>
        <dbReference type="ChEBI" id="CHEBI:15378"/>
        <dbReference type="ChEBI" id="CHEBI:15740"/>
        <dbReference type="ChEBI" id="CHEBI:30616"/>
        <dbReference type="ChEBI" id="CHEBI:43474"/>
        <dbReference type="ChEBI" id="CHEBI:143788"/>
        <dbReference type="ChEBI" id="CHEBI:147286"/>
        <dbReference type="ChEBI" id="CHEBI:456216"/>
        <dbReference type="EC" id="6.3.1.21"/>
    </reaction>
    <physiologicalReaction direction="left-to-right" evidence="1">
        <dbReference type="Rhea" id="RHEA:24830"/>
    </physiologicalReaction>
</comment>
<comment type="pathway">
    <text evidence="1">Purine metabolism; IMP biosynthesis via de novo pathway; N(2)-formyl-N(1)-(5-phospho-D-ribosyl)glycinamide from N(1)-(5-phospho-D-ribosyl)glycinamide (formate route): step 1/1.</text>
</comment>
<comment type="subunit">
    <text evidence="1">Homodimer.</text>
</comment>
<comment type="similarity">
    <text evidence="1">Belongs to the PurK/PurT family.</text>
</comment>